<gene>
    <name evidence="1" type="primary">gatA</name>
    <name type="ordered locus">Mevan_0822</name>
</gene>
<proteinExistence type="inferred from homology"/>
<comment type="function">
    <text evidence="1">Allows the formation of correctly charged Gln-tRNA(Gln) through the transamidation of misacylated Glu-tRNA(Gln) in organisms which lack glutaminyl-tRNA synthetase. The reaction takes place in the presence of glutamine and ATP through an activated gamma-phospho-Glu-tRNA(Gln).</text>
</comment>
<comment type="catalytic activity">
    <reaction evidence="1">
        <text>L-glutamyl-tRNA(Gln) + L-glutamine + ATP + H2O = L-glutaminyl-tRNA(Gln) + L-glutamate + ADP + phosphate + H(+)</text>
        <dbReference type="Rhea" id="RHEA:17521"/>
        <dbReference type="Rhea" id="RHEA-COMP:9681"/>
        <dbReference type="Rhea" id="RHEA-COMP:9684"/>
        <dbReference type="ChEBI" id="CHEBI:15377"/>
        <dbReference type="ChEBI" id="CHEBI:15378"/>
        <dbReference type="ChEBI" id="CHEBI:29985"/>
        <dbReference type="ChEBI" id="CHEBI:30616"/>
        <dbReference type="ChEBI" id="CHEBI:43474"/>
        <dbReference type="ChEBI" id="CHEBI:58359"/>
        <dbReference type="ChEBI" id="CHEBI:78520"/>
        <dbReference type="ChEBI" id="CHEBI:78521"/>
        <dbReference type="ChEBI" id="CHEBI:456216"/>
        <dbReference type="EC" id="6.3.5.7"/>
    </reaction>
</comment>
<comment type="subunit">
    <text evidence="1">Heterotrimer of A, B and C subunits.</text>
</comment>
<comment type="similarity">
    <text evidence="1">Belongs to the amidase family. GatA subfamily.</text>
</comment>
<protein>
    <recommendedName>
        <fullName evidence="1">Glutamyl-tRNA(Gln) amidotransferase subunit A</fullName>
        <shortName evidence="1">Glu-ADT subunit A</shortName>
        <ecNumber evidence="1">6.3.5.7</ecNumber>
    </recommendedName>
</protein>
<sequence>MITDRVSDYLEKIEKSDINAFIDLNGERVLKEAKDLEKNEKLKNKSLYGKIIAVKSNINVEGYKISCASKTLDNYTGTYDATVIKKLRSEGALIIGMTNMDEFASGSSGETSYYGPTKNPKALDRIPGGSSSGSAAAVSADLCDMALGSDTGGSIRNPASHCGVVGFKPTYGVVSRQGLCDLAMSFDQIGPLTKTAEDSLNLTNVIKGLDLSNTTSLKTPKFEKKEIKDYKIGVVREFMDVTDEKIRNEIEKGIEVFRDLGCEIVDLSYKYIDLALPTYYLINYVEFYSATRKYDGRRFGEVIEEACGEEVLRRILIGKHISEQEFSGKYYKKALQARKEMKKEMIGLFNSVDLIVGPTVPKLPHKIGEELSPMEMYAYDVLTVLTNICGICSGVVGCGNINGIPVGLQIQGASLDDEKVLSAMIEFENNY</sequence>
<feature type="chain" id="PRO_1000015864" description="Glutamyl-tRNA(Gln) amidotransferase subunit A">
    <location>
        <begin position="1"/>
        <end position="431"/>
    </location>
</feature>
<feature type="active site" description="Charge relay system" evidence="1">
    <location>
        <position position="55"/>
    </location>
</feature>
<feature type="active site" description="Charge relay system" evidence="1">
    <location>
        <position position="130"/>
    </location>
</feature>
<feature type="active site" description="Acyl-ester intermediate" evidence="1">
    <location>
        <position position="154"/>
    </location>
</feature>
<keyword id="KW-0067">ATP-binding</keyword>
<keyword id="KW-0436">Ligase</keyword>
<keyword id="KW-0547">Nucleotide-binding</keyword>
<keyword id="KW-0648">Protein biosynthesis</keyword>
<evidence type="ECO:0000255" key="1">
    <source>
        <dbReference type="HAMAP-Rule" id="MF_00120"/>
    </source>
</evidence>
<organism>
    <name type="scientific">Methanococcus vannielii (strain ATCC 35089 / DSM 1224 / JCM 13029 / OCM 148 / SB)</name>
    <dbReference type="NCBI Taxonomy" id="406327"/>
    <lineage>
        <taxon>Archaea</taxon>
        <taxon>Methanobacteriati</taxon>
        <taxon>Methanobacteriota</taxon>
        <taxon>Methanomada group</taxon>
        <taxon>Methanococci</taxon>
        <taxon>Methanococcales</taxon>
        <taxon>Methanococcaceae</taxon>
        <taxon>Methanococcus</taxon>
    </lineage>
</organism>
<accession>A6UQF6</accession>
<reference key="1">
    <citation type="submission" date="2007-06" db="EMBL/GenBank/DDBJ databases">
        <title>Complete sequence of Methanococcus vannielii SB.</title>
        <authorList>
            <consortium name="US DOE Joint Genome Institute"/>
            <person name="Copeland A."/>
            <person name="Lucas S."/>
            <person name="Lapidus A."/>
            <person name="Barry K."/>
            <person name="Glavina del Rio T."/>
            <person name="Dalin E."/>
            <person name="Tice H."/>
            <person name="Pitluck S."/>
            <person name="Chain P."/>
            <person name="Malfatti S."/>
            <person name="Shin M."/>
            <person name="Vergez L."/>
            <person name="Schmutz J."/>
            <person name="Larimer F."/>
            <person name="Land M."/>
            <person name="Hauser L."/>
            <person name="Kyrpides N."/>
            <person name="Anderson I."/>
            <person name="Sieprawska-Lupa M."/>
            <person name="Whitman W.B."/>
            <person name="Richardson P."/>
        </authorList>
    </citation>
    <scope>NUCLEOTIDE SEQUENCE [LARGE SCALE GENOMIC DNA]</scope>
    <source>
        <strain>ATCC 35089 / DSM 1224 / JCM 13029 / OCM 148 / SB</strain>
    </source>
</reference>
<dbReference type="EC" id="6.3.5.7" evidence="1"/>
<dbReference type="EMBL" id="CP000742">
    <property type="protein sequence ID" value="ABR54728.1"/>
    <property type="molecule type" value="Genomic_DNA"/>
</dbReference>
<dbReference type="RefSeq" id="WP_011972629.1">
    <property type="nucleotide sequence ID" value="NC_009634.1"/>
</dbReference>
<dbReference type="SMR" id="A6UQF6"/>
<dbReference type="STRING" id="406327.Mevan_0822"/>
<dbReference type="GeneID" id="5325110"/>
<dbReference type="KEGG" id="mvn:Mevan_0822"/>
<dbReference type="eggNOG" id="arCOG01717">
    <property type="taxonomic scope" value="Archaea"/>
</dbReference>
<dbReference type="HOGENOM" id="CLU_009600_0_3_2"/>
<dbReference type="OrthoDB" id="7931at2157"/>
<dbReference type="Proteomes" id="UP000001107">
    <property type="component" value="Chromosome"/>
</dbReference>
<dbReference type="GO" id="GO:0030956">
    <property type="term" value="C:glutamyl-tRNA(Gln) amidotransferase complex"/>
    <property type="evidence" value="ECO:0007669"/>
    <property type="project" value="InterPro"/>
</dbReference>
<dbReference type="GO" id="GO:0005524">
    <property type="term" value="F:ATP binding"/>
    <property type="evidence" value="ECO:0007669"/>
    <property type="project" value="UniProtKB-KW"/>
</dbReference>
<dbReference type="GO" id="GO:0050567">
    <property type="term" value="F:glutaminyl-tRNA synthase (glutamine-hydrolyzing) activity"/>
    <property type="evidence" value="ECO:0007669"/>
    <property type="project" value="UniProtKB-UniRule"/>
</dbReference>
<dbReference type="GO" id="GO:0006412">
    <property type="term" value="P:translation"/>
    <property type="evidence" value="ECO:0007669"/>
    <property type="project" value="UniProtKB-UniRule"/>
</dbReference>
<dbReference type="Gene3D" id="3.90.1300.10">
    <property type="entry name" value="Amidase signature (AS) domain"/>
    <property type="match status" value="1"/>
</dbReference>
<dbReference type="HAMAP" id="MF_00120">
    <property type="entry name" value="GatA"/>
    <property type="match status" value="1"/>
</dbReference>
<dbReference type="InterPro" id="IPR000120">
    <property type="entry name" value="Amidase"/>
</dbReference>
<dbReference type="InterPro" id="IPR020556">
    <property type="entry name" value="Amidase_CS"/>
</dbReference>
<dbReference type="InterPro" id="IPR023631">
    <property type="entry name" value="Amidase_dom"/>
</dbReference>
<dbReference type="InterPro" id="IPR036928">
    <property type="entry name" value="AS_sf"/>
</dbReference>
<dbReference type="InterPro" id="IPR004412">
    <property type="entry name" value="GatA"/>
</dbReference>
<dbReference type="NCBIfam" id="TIGR00132">
    <property type="entry name" value="gatA"/>
    <property type="match status" value="1"/>
</dbReference>
<dbReference type="PANTHER" id="PTHR11895:SF7">
    <property type="entry name" value="GLUTAMYL-TRNA(GLN) AMIDOTRANSFERASE SUBUNIT A, MITOCHONDRIAL"/>
    <property type="match status" value="1"/>
</dbReference>
<dbReference type="PANTHER" id="PTHR11895">
    <property type="entry name" value="TRANSAMIDASE"/>
    <property type="match status" value="1"/>
</dbReference>
<dbReference type="Pfam" id="PF01425">
    <property type="entry name" value="Amidase"/>
    <property type="match status" value="1"/>
</dbReference>
<dbReference type="SUPFAM" id="SSF75304">
    <property type="entry name" value="Amidase signature (AS) enzymes"/>
    <property type="match status" value="1"/>
</dbReference>
<dbReference type="PROSITE" id="PS00571">
    <property type="entry name" value="AMIDASES"/>
    <property type="match status" value="1"/>
</dbReference>
<name>GATA_METVS</name>